<gene>
    <name type="primary">aroP</name>
    <name type="ordered locus">SF0109</name>
    <name type="ordered locus">S0111</name>
</gene>
<organism>
    <name type="scientific">Shigella flexneri</name>
    <dbReference type="NCBI Taxonomy" id="623"/>
    <lineage>
        <taxon>Bacteria</taxon>
        <taxon>Pseudomonadati</taxon>
        <taxon>Pseudomonadota</taxon>
        <taxon>Gammaproteobacteria</taxon>
        <taxon>Enterobacterales</taxon>
        <taxon>Enterobacteriaceae</taxon>
        <taxon>Shigella</taxon>
    </lineage>
</organism>
<dbReference type="EMBL" id="AE005674">
    <property type="protein sequence ID" value="AAN41773.1"/>
    <property type="molecule type" value="Genomic_DNA"/>
</dbReference>
<dbReference type="EMBL" id="AE014073">
    <property type="protein sequence ID" value="AAP15654.1"/>
    <property type="molecule type" value="Genomic_DNA"/>
</dbReference>
<dbReference type="RefSeq" id="NP_706066.1">
    <property type="nucleotide sequence ID" value="NC_004337.2"/>
</dbReference>
<dbReference type="RefSeq" id="WP_000969912.1">
    <property type="nucleotide sequence ID" value="NZ_WPGW01000007.1"/>
</dbReference>
<dbReference type="SMR" id="P59737"/>
<dbReference type="STRING" id="198214.SF0109"/>
<dbReference type="PaxDb" id="198214-SF0109"/>
<dbReference type="GeneID" id="1024518"/>
<dbReference type="GeneID" id="75170011"/>
<dbReference type="KEGG" id="sfl:SF0109"/>
<dbReference type="KEGG" id="sfx:S0111"/>
<dbReference type="PATRIC" id="fig|198214.7.peg.123"/>
<dbReference type="HOGENOM" id="CLU_007946_9_3_6"/>
<dbReference type="Proteomes" id="UP000001006">
    <property type="component" value="Chromosome"/>
</dbReference>
<dbReference type="Proteomes" id="UP000002673">
    <property type="component" value="Chromosome"/>
</dbReference>
<dbReference type="GO" id="GO:0005886">
    <property type="term" value="C:plasma membrane"/>
    <property type="evidence" value="ECO:0007669"/>
    <property type="project" value="UniProtKB-SubCell"/>
</dbReference>
<dbReference type="GO" id="GO:0006865">
    <property type="term" value="P:amino acid transport"/>
    <property type="evidence" value="ECO:0007669"/>
    <property type="project" value="UniProtKB-KW"/>
</dbReference>
<dbReference type="GO" id="GO:0055085">
    <property type="term" value="P:transmembrane transport"/>
    <property type="evidence" value="ECO:0007669"/>
    <property type="project" value="InterPro"/>
</dbReference>
<dbReference type="FunFam" id="1.20.1740.10:FF:000001">
    <property type="entry name" value="Amino acid permease"/>
    <property type="match status" value="1"/>
</dbReference>
<dbReference type="Gene3D" id="1.20.1740.10">
    <property type="entry name" value="Amino acid/polyamine transporter I"/>
    <property type="match status" value="1"/>
</dbReference>
<dbReference type="InterPro" id="IPR004841">
    <property type="entry name" value="AA-permease/SLC12A_dom"/>
</dbReference>
<dbReference type="InterPro" id="IPR004840">
    <property type="entry name" value="Amino_acid_permease_CS"/>
</dbReference>
<dbReference type="NCBIfam" id="NF007594">
    <property type="entry name" value="PRK10238.1"/>
    <property type="match status" value="1"/>
</dbReference>
<dbReference type="PANTHER" id="PTHR43495:SF4">
    <property type="entry name" value="AROMATIC AMINO ACID TRANSPORT PROTEIN AROP"/>
    <property type="match status" value="1"/>
</dbReference>
<dbReference type="PANTHER" id="PTHR43495">
    <property type="entry name" value="GABA PERMEASE"/>
    <property type="match status" value="1"/>
</dbReference>
<dbReference type="Pfam" id="PF00324">
    <property type="entry name" value="AA_permease"/>
    <property type="match status" value="1"/>
</dbReference>
<dbReference type="PIRSF" id="PIRSF006060">
    <property type="entry name" value="AA_transporter"/>
    <property type="match status" value="1"/>
</dbReference>
<dbReference type="PROSITE" id="PS00218">
    <property type="entry name" value="AMINO_ACID_PERMEASE_1"/>
    <property type="match status" value="1"/>
</dbReference>
<sequence length="457" mass="49676">MMEGQQHGEQLKRGLKNRHIQLIALGGAIGTGLFLGSASVIQSAGPGIILGYAIAGFIAFLIMRQLGEMVVEEPVAGSFSHFAYKYWGSFAGFASGWNYWVLYVLVAMAELTAVGKYIQFWYPEIPTWVSAAVFFVVINAINLTNVKVFGEMEFWFAIIKVIAVVAMIIFGGWLLFSGNGGPQASVSNLWDQGGFLPHGFTGLVMMMAIIMFSFGGLELVGITAAEADNPEQSIPKATNQVIYRILIFYIGSLAVLLSLMPWTRVTADTSPFVLIFHELGDTFVANALNIVVLTAALSVYNSCVYCNSRMLFGLAQQGNAPKALASVDKRGVPVNTILVSALVTALCVLINYLAPESAFGLLMALVVSALVINWAMISLAHMKFRRAKQEQGVVTRFPALLYPLGNWICLLFMAAVLVIMLMTPGMAISVYLIPVWLIVLGIGYLFKEKTAKAVKAH</sequence>
<reference key="1">
    <citation type="journal article" date="2002" name="Nucleic Acids Res.">
        <title>Genome sequence of Shigella flexneri 2a: insights into pathogenicity through comparison with genomes of Escherichia coli K12 and O157.</title>
        <authorList>
            <person name="Jin Q."/>
            <person name="Yuan Z."/>
            <person name="Xu J."/>
            <person name="Wang Y."/>
            <person name="Shen Y."/>
            <person name="Lu W."/>
            <person name="Wang J."/>
            <person name="Liu H."/>
            <person name="Yang J."/>
            <person name="Yang F."/>
            <person name="Zhang X."/>
            <person name="Zhang J."/>
            <person name="Yang G."/>
            <person name="Wu H."/>
            <person name="Qu D."/>
            <person name="Dong J."/>
            <person name="Sun L."/>
            <person name="Xue Y."/>
            <person name="Zhao A."/>
            <person name="Gao Y."/>
            <person name="Zhu J."/>
            <person name="Kan B."/>
            <person name="Ding K."/>
            <person name="Chen S."/>
            <person name="Cheng H."/>
            <person name="Yao Z."/>
            <person name="He B."/>
            <person name="Chen R."/>
            <person name="Ma D."/>
            <person name="Qiang B."/>
            <person name="Wen Y."/>
            <person name="Hou Y."/>
            <person name="Yu J."/>
        </authorList>
    </citation>
    <scope>NUCLEOTIDE SEQUENCE [LARGE SCALE GENOMIC DNA]</scope>
    <source>
        <strain>301 / Serotype 2a</strain>
    </source>
</reference>
<reference key="2">
    <citation type="journal article" date="2003" name="Infect. Immun.">
        <title>Complete genome sequence and comparative genomics of Shigella flexneri serotype 2a strain 2457T.</title>
        <authorList>
            <person name="Wei J."/>
            <person name="Goldberg M.B."/>
            <person name="Burland V."/>
            <person name="Venkatesan M.M."/>
            <person name="Deng W."/>
            <person name="Fournier G."/>
            <person name="Mayhew G.F."/>
            <person name="Plunkett G. III"/>
            <person name="Rose D.J."/>
            <person name="Darling A."/>
            <person name="Mau B."/>
            <person name="Perna N.T."/>
            <person name="Payne S.M."/>
            <person name="Runyen-Janecky L.J."/>
            <person name="Zhou S."/>
            <person name="Schwartz D.C."/>
            <person name="Blattner F.R."/>
        </authorList>
    </citation>
    <scope>NUCLEOTIDE SEQUENCE [LARGE SCALE GENOMIC DNA]</scope>
    <source>
        <strain>ATCC 700930 / 2457T / Serotype 2a</strain>
    </source>
</reference>
<protein>
    <recommendedName>
        <fullName evidence="1">Aromatic amino acid transport protein AroP</fullName>
    </recommendedName>
    <alternativeName>
        <fullName evidence="1">Aromatic amino acid:H(+) symporter AroP</fullName>
    </alternativeName>
    <alternativeName>
        <fullName evidence="1">General aromatic amino acid permease</fullName>
    </alternativeName>
</protein>
<proteinExistence type="inferred from homology"/>
<comment type="function">
    <text evidence="1">Permease that is involved in the active transport across the cytoplasmic membrane of all three aromatic amino acids, phenylalanine, tyrosine and tryptophan.</text>
</comment>
<comment type="catalytic activity">
    <reaction evidence="1">
        <text>L-phenylalanine(in) + H(+)(in) = L-phenylalanine(out) + H(+)(out)</text>
        <dbReference type="Rhea" id="RHEA:28923"/>
        <dbReference type="ChEBI" id="CHEBI:15378"/>
        <dbReference type="ChEBI" id="CHEBI:58095"/>
    </reaction>
    <physiologicalReaction direction="right-to-left" evidence="1">
        <dbReference type="Rhea" id="RHEA:28925"/>
    </physiologicalReaction>
</comment>
<comment type="catalytic activity">
    <reaction evidence="1">
        <text>L-tryptophan(in) + H(+)(in) = L-tryptophan(out) + H(+)(out)</text>
        <dbReference type="Rhea" id="RHEA:28879"/>
        <dbReference type="ChEBI" id="CHEBI:15378"/>
        <dbReference type="ChEBI" id="CHEBI:57912"/>
    </reaction>
    <physiologicalReaction direction="right-to-left" evidence="1">
        <dbReference type="Rhea" id="RHEA:28881"/>
    </physiologicalReaction>
</comment>
<comment type="catalytic activity">
    <reaction evidence="1">
        <text>L-tyrosine(in) + H(+)(in) = L-tyrosine(out) + H(+)(out)</text>
        <dbReference type="Rhea" id="RHEA:28875"/>
        <dbReference type="ChEBI" id="CHEBI:15378"/>
        <dbReference type="ChEBI" id="CHEBI:58315"/>
    </reaction>
    <physiologicalReaction direction="right-to-left" evidence="1">
        <dbReference type="Rhea" id="RHEA:28877"/>
    </physiologicalReaction>
</comment>
<comment type="subcellular location">
    <subcellularLocation>
        <location evidence="1">Cell inner membrane</location>
        <topology evidence="1">Multi-pass membrane protein</topology>
    </subcellularLocation>
</comment>
<comment type="similarity">
    <text evidence="3">Belongs to the amino acid-polyamine-organocation (APC) superfamily. Amino acid transporter (AAT) (TC 2.A.3.1) family.</text>
</comment>
<evidence type="ECO:0000250" key="1">
    <source>
        <dbReference type="UniProtKB" id="P15993"/>
    </source>
</evidence>
<evidence type="ECO:0000255" key="2"/>
<evidence type="ECO:0000305" key="3"/>
<name>AROP_SHIFL</name>
<accession>P59737</accession>
<keyword id="KW-0029">Amino-acid transport</keyword>
<keyword id="KW-0997">Cell inner membrane</keyword>
<keyword id="KW-1003">Cell membrane</keyword>
<keyword id="KW-0472">Membrane</keyword>
<keyword id="KW-1185">Reference proteome</keyword>
<keyword id="KW-0812">Transmembrane</keyword>
<keyword id="KW-1133">Transmembrane helix</keyword>
<keyword id="KW-0813">Transport</keyword>
<feature type="chain" id="PRO_0000054198" description="Aromatic amino acid transport protein AroP">
    <location>
        <begin position="1"/>
        <end position="457"/>
    </location>
</feature>
<feature type="topological domain" description="Cytoplasmic" evidence="2">
    <location>
        <begin position="1"/>
        <end position="19"/>
    </location>
</feature>
<feature type="transmembrane region" description="Helical" evidence="2">
    <location>
        <begin position="20"/>
        <end position="40"/>
    </location>
</feature>
<feature type="topological domain" description="Periplasmic" evidence="2">
    <location>
        <begin position="41"/>
        <end position="42"/>
    </location>
</feature>
<feature type="transmembrane region" description="Helical" evidence="2">
    <location>
        <begin position="43"/>
        <end position="63"/>
    </location>
</feature>
<feature type="topological domain" description="Cytoplasmic" evidence="2">
    <location>
        <begin position="64"/>
        <end position="86"/>
    </location>
</feature>
<feature type="transmembrane region" description="Helical" evidence="2">
    <location>
        <begin position="87"/>
        <end position="107"/>
    </location>
</feature>
<feature type="topological domain" description="Periplasmic" evidence="2">
    <location>
        <begin position="108"/>
        <end position="117"/>
    </location>
</feature>
<feature type="transmembrane region" description="Helical" evidence="2">
    <location>
        <begin position="118"/>
        <end position="138"/>
    </location>
</feature>
<feature type="topological domain" description="Cytoplasmic" evidence="2">
    <location>
        <begin position="139"/>
        <end position="155"/>
    </location>
</feature>
<feature type="transmembrane region" description="Helical" evidence="2">
    <location>
        <begin position="156"/>
        <end position="176"/>
    </location>
</feature>
<feature type="topological domain" description="Periplasmic" evidence="2">
    <location>
        <begin position="177"/>
        <end position="201"/>
    </location>
</feature>
<feature type="transmembrane region" description="Helical" evidence="2">
    <location>
        <begin position="202"/>
        <end position="222"/>
    </location>
</feature>
<feature type="topological domain" description="Cytoplasmic" evidence="2">
    <location>
        <begin position="223"/>
        <end position="240"/>
    </location>
</feature>
<feature type="transmembrane region" description="Helical" evidence="2">
    <location>
        <begin position="241"/>
        <end position="261"/>
    </location>
</feature>
<feature type="topological domain" description="Periplasmic" evidence="2">
    <location>
        <begin position="262"/>
        <end position="271"/>
    </location>
</feature>
<feature type="transmembrane region" description="Helical" evidence="2">
    <location>
        <begin position="272"/>
        <end position="292"/>
    </location>
</feature>
<feature type="topological domain" description="Cytoplasmic" evidence="2">
    <location>
        <begin position="293"/>
        <end position="333"/>
    </location>
</feature>
<feature type="transmembrane region" description="Helical" evidence="2">
    <location>
        <begin position="334"/>
        <end position="354"/>
    </location>
</feature>
<feature type="topological domain" description="Periplasmic" evidence="2">
    <location>
        <begin position="355"/>
        <end position="358"/>
    </location>
</feature>
<feature type="transmembrane region" description="Helical" evidence="2">
    <location>
        <begin position="359"/>
        <end position="379"/>
    </location>
</feature>
<feature type="topological domain" description="Cytoplasmic" evidence="2">
    <location>
        <begin position="380"/>
        <end position="399"/>
    </location>
</feature>
<feature type="transmembrane region" description="Helical" evidence="2">
    <location>
        <begin position="400"/>
        <end position="420"/>
    </location>
</feature>
<feature type="topological domain" description="Periplasmic" evidence="2">
    <location>
        <begin position="421"/>
        <end position="425"/>
    </location>
</feature>
<feature type="transmembrane region" description="Helical" evidence="2">
    <location>
        <begin position="426"/>
        <end position="446"/>
    </location>
</feature>
<feature type="topological domain" description="Cytoplasmic" evidence="2">
    <location>
        <begin position="447"/>
        <end position="457"/>
    </location>
</feature>